<reference key="1">
    <citation type="journal article" date="2005" name="Nat. Biotechnol.">
        <title>Complete genome sequence of the plant commensal Pseudomonas fluorescens Pf-5.</title>
        <authorList>
            <person name="Paulsen I.T."/>
            <person name="Press C.M."/>
            <person name="Ravel J."/>
            <person name="Kobayashi D.Y."/>
            <person name="Myers G.S.A."/>
            <person name="Mavrodi D.V."/>
            <person name="DeBoy R.T."/>
            <person name="Seshadri R."/>
            <person name="Ren Q."/>
            <person name="Madupu R."/>
            <person name="Dodson R.J."/>
            <person name="Durkin A.S."/>
            <person name="Brinkac L.M."/>
            <person name="Daugherty S.C."/>
            <person name="Sullivan S.A."/>
            <person name="Rosovitz M.J."/>
            <person name="Gwinn M.L."/>
            <person name="Zhou L."/>
            <person name="Schneider D.J."/>
            <person name="Cartinhour S.W."/>
            <person name="Nelson W.C."/>
            <person name="Weidman J."/>
            <person name="Watkins K."/>
            <person name="Tran K."/>
            <person name="Khouri H."/>
            <person name="Pierson E.A."/>
            <person name="Pierson L.S. III"/>
            <person name="Thomashow L.S."/>
            <person name="Loper J.E."/>
        </authorList>
    </citation>
    <scope>NUCLEOTIDE SEQUENCE [LARGE SCALE GENOMIC DNA]</scope>
    <source>
        <strain>ATCC BAA-477 / NRRL B-23932 / Pf-5</strain>
    </source>
</reference>
<gene>
    <name evidence="1" type="primary">groEL</name>
    <name evidence="1" type="synonym">groL</name>
    <name type="ordered locus">PFL_4838</name>
</gene>
<keyword id="KW-0067">ATP-binding</keyword>
<keyword id="KW-0143">Chaperone</keyword>
<keyword id="KW-0963">Cytoplasm</keyword>
<keyword id="KW-0413">Isomerase</keyword>
<keyword id="KW-0547">Nucleotide-binding</keyword>
<organism>
    <name type="scientific">Pseudomonas fluorescens (strain ATCC BAA-477 / NRRL B-23932 / Pf-5)</name>
    <dbReference type="NCBI Taxonomy" id="220664"/>
    <lineage>
        <taxon>Bacteria</taxon>
        <taxon>Pseudomonadati</taxon>
        <taxon>Pseudomonadota</taxon>
        <taxon>Gammaproteobacteria</taxon>
        <taxon>Pseudomonadales</taxon>
        <taxon>Pseudomonadaceae</taxon>
        <taxon>Pseudomonas</taxon>
    </lineage>
</organism>
<evidence type="ECO:0000255" key="1">
    <source>
        <dbReference type="HAMAP-Rule" id="MF_00600"/>
    </source>
</evidence>
<protein>
    <recommendedName>
        <fullName evidence="1">Chaperonin GroEL</fullName>
        <ecNumber evidence="1">5.6.1.7</ecNumber>
    </recommendedName>
    <alternativeName>
        <fullName evidence="1">60 kDa chaperonin</fullName>
    </alternativeName>
    <alternativeName>
        <fullName evidence="1">Chaperonin-60</fullName>
        <shortName evidence="1">Cpn60</shortName>
    </alternativeName>
</protein>
<feature type="chain" id="PRO_0000256950" description="Chaperonin GroEL">
    <location>
        <begin position="1"/>
        <end position="547"/>
    </location>
</feature>
<feature type="binding site" evidence="1">
    <location>
        <begin position="30"/>
        <end position="33"/>
    </location>
    <ligand>
        <name>ATP</name>
        <dbReference type="ChEBI" id="CHEBI:30616"/>
    </ligand>
</feature>
<feature type="binding site" evidence="1">
    <location>
        <position position="51"/>
    </location>
    <ligand>
        <name>ATP</name>
        <dbReference type="ChEBI" id="CHEBI:30616"/>
    </ligand>
</feature>
<feature type="binding site" evidence="1">
    <location>
        <begin position="87"/>
        <end position="91"/>
    </location>
    <ligand>
        <name>ATP</name>
        <dbReference type="ChEBI" id="CHEBI:30616"/>
    </ligand>
</feature>
<feature type="binding site" evidence="1">
    <location>
        <position position="415"/>
    </location>
    <ligand>
        <name>ATP</name>
        <dbReference type="ChEBI" id="CHEBI:30616"/>
    </ligand>
</feature>
<feature type="binding site" evidence="1">
    <location>
        <begin position="479"/>
        <end position="481"/>
    </location>
    <ligand>
        <name>ATP</name>
        <dbReference type="ChEBI" id="CHEBI:30616"/>
    </ligand>
</feature>
<feature type="binding site" evidence="1">
    <location>
        <position position="495"/>
    </location>
    <ligand>
        <name>ATP</name>
        <dbReference type="ChEBI" id="CHEBI:30616"/>
    </ligand>
</feature>
<comment type="function">
    <text evidence="1">Together with its co-chaperonin GroES, plays an essential role in assisting protein folding. The GroEL-GroES system forms a nano-cage that allows encapsulation of the non-native substrate proteins and provides a physical environment optimized to promote and accelerate protein folding.</text>
</comment>
<comment type="catalytic activity">
    <reaction evidence="1">
        <text>ATP + H2O + a folded polypeptide = ADP + phosphate + an unfolded polypeptide.</text>
        <dbReference type="EC" id="5.6.1.7"/>
    </reaction>
</comment>
<comment type="subunit">
    <text evidence="1">Forms a cylinder of 14 subunits composed of two heptameric rings stacked back-to-back. Interacts with the co-chaperonin GroES.</text>
</comment>
<comment type="subcellular location">
    <subcellularLocation>
        <location evidence="1">Cytoplasm</location>
    </subcellularLocation>
</comment>
<comment type="similarity">
    <text evidence="1">Belongs to the chaperonin (HSP60) family.</text>
</comment>
<accession>Q4K764</accession>
<name>CH60_PSEF5</name>
<dbReference type="EC" id="5.6.1.7" evidence="1"/>
<dbReference type="EMBL" id="CP000076">
    <property type="protein sequence ID" value="AAY94068.1"/>
    <property type="molecule type" value="Genomic_DNA"/>
</dbReference>
<dbReference type="RefSeq" id="WP_011063092.1">
    <property type="nucleotide sequence ID" value="NC_004129.6"/>
</dbReference>
<dbReference type="SMR" id="Q4K764"/>
<dbReference type="STRING" id="220664.PFL_4838"/>
<dbReference type="GeneID" id="57477817"/>
<dbReference type="KEGG" id="pfl:PFL_4838"/>
<dbReference type="PATRIC" id="fig|220664.5.peg.4951"/>
<dbReference type="eggNOG" id="COG0459">
    <property type="taxonomic scope" value="Bacteria"/>
</dbReference>
<dbReference type="HOGENOM" id="CLU_016503_3_0_6"/>
<dbReference type="Proteomes" id="UP000008540">
    <property type="component" value="Chromosome"/>
</dbReference>
<dbReference type="GO" id="GO:0005737">
    <property type="term" value="C:cytoplasm"/>
    <property type="evidence" value="ECO:0007669"/>
    <property type="project" value="UniProtKB-SubCell"/>
</dbReference>
<dbReference type="GO" id="GO:0005524">
    <property type="term" value="F:ATP binding"/>
    <property type="evidence" value="ECO:0007669"/>
    <property type="project" value="UniProtKB-UniRule"/>
</dbReference>
<dbReference type="GO" id="GO:0140662">
    <property type="term" value="F:ATP-dependent protein folding chaperone"/>
    <property type="evidence" value="ECO:0007669"/>
    <property type="project" value="InterPro"/>
</dbReference>
<dbReference type="GO" id="GO:0016853">
    <property type="term" value="F:isomerase activity"/>
    <property type="evidence" value="ECO:0007669"/>
    <property type="project" value="UniProtKB-KW"/>
</dbReference>
<dbReference type="GO" id="GO:0051082">
    <property type="term" value="F:unfolded protein binding"/>
    <property type="evidence" value="ECO:0007669"/>
    <property type="project" value="UniProtKB-UniRule"/>
</dbReference>
<dbReference type="GO" id="GO:0042026">
    <property type="term" value="P:protein refolding"/>
    <property type="evidence" value="ECO:0007669"/>
    <property type="project" value="UniProtKB-UniRule"/>
</dbReference>
<dbReference type="CDD" id="cd03344">
    <property type="entry name" value="GroEL"/>
    <property type="match status" value="1"/>
</dbReference>
<dbReference type="FunFam" id="1.10.560.10:FF:000001">
    <property type="entry name" value="60 kDa chaperonin"/>
    <property type="match status" value="1"/>
</dbReference>
<dbReference type="FunFam" id="3.50.7.10:FF:000001">
    <property type="entry name" value="60 kDa chaperonin"/>
    <property type="match status" value="1"/>
</dbReference>
<dbReference type="Gene3D" id="3.50.7.10">
    <property type="entry name" value="GroEL"/>
    <property type="match status" value="1"/>
</dbReference>
<dbReference type="Gene3D" id="1.10.560.10">
    <property type="entry name" value="GroEL-like equatorial domain"/>
    <property type="match status" value="1"/>
</dbReference>
<dbReference type="Gene3D" id="3.30.260.10">
    <property type="entry name" value="TCP-1-like chaperonin intermediate domain"/>
    <property type="match status" value="1"/>
</dbReference>
<dbReference type="HAMAP" id="MF_00600">
    <property type="entry name" value="CH60"/>
    <property type="match status" value="1"/>
</dbReference>
<dbReference type="InterPro" id="IPR018370">
    <property type="entry name" value="Chaperonin_Cpn60_CS"/>
</dbReference>
<dbReference type="InterPro" id="IPR001844">
    <property type="entry name" value="Cpn60/GroEL"/>
</dbReference>
<dbReference type="InterPro" id="IPR002423">
    <property type="entry name" value="Cpn60/GroEL/TCP-1"/>
</dbReference>
<dbReference type="InterPro" id="IPR027409">
    <property type="entry name" value="GroEL-like_apical_dom_sf"/>
</dbReference>
<dbReference type="InterPro" id="IPR027413">
    <property type="entry name" value="GROEL-like_equatorial_sf"/>
</dbReference>
<dbReference type="InterPro" id="IPR027410">
    <property type="entry name" value="TCP-1-like_intermed_sf"/>
</dbReference>
<dbReference type="NCBIfam" id="TIGR02348">
    <property type="entry name" value="GroEL"/>
    <property type="match status" value="1"/>
</dbReference>
<dbReference type="NCBIfam" id="NF000592">
    <property type="entry name" value="PRK00013.1"/>
    <property type="match status" value="1"/>
</dbReference>
<dbReference type="NCBIfam" id="NF009487">
    <property type="entry name" value="PRK12849.1"/>
    <property type="match status" value="1"/>
</dbReference>
<dbReference type="NCBIfam" id="NF009488">
    <property type="entry name" value="PRK12850.1"/>
    <property type="match status" value="1"/>
</dbReference>
<dbReference type="NCBIfam" id="NF009489">
    <property type="entry name" value="PRK12851.1"/>
    <property type="match status" value="1"/>
</dbReference>
<dbReference type="PANTHER" id="PTHR45633">
    <property type="entry name" value="60 KDA HEAT SHOCK PROTEIN, MITOCHONDRIAL"/>
    <property type="match status" value="1"/>
</dbReference>
<dbReference type="Pfam" id="PF00118">
    <property type="entry name" value="Cpn60_TCP1"/>
    <property type="match status" value="1"/>
</dbReference>
<dbReference type="PRINTS" id="PR00298">
    <property type="entry name" value="CHAPERONIN60"/>
</dbReference>
<dbReference type="SUPFAM" id="SSF52029">
    <property type="entry name" value="GroEL apical domain-like"/>
    <property type="match status" value="1"/>
</dbReference>
<dbReference type="SUPFAM" id="SSF48592">
    <property type="entry name" value="GroEL equatorial domain-like"/>
    <property type="match status" value="1"/>
</dbReference>
<dbReference type="SUPFAM" id="SSF54849">
    <property type="entry name" value="GroEL-intermediate domain like"/>
    <property type="match status" value="1"/>
</dbReference>
<dbReference type="PROSITE" id="PS00296">
    <property type="entry name" value="CHAPERONINS_CPN60"/>
    <property type="match status" value="1"/>
</dbReference>
<proteinExistence type="inferred from homology"/>
<sequence>MAAKEVKFGDSARKKMLTGVNVLADAVKATLGPKGRNVIIEKSFGAPTITKDGVSVAKEIELKDRFENMGAQLVKDVASRANDDAGDGTTTATVLAQSIVNEGLKAVAAGMNPMDLKRGIDKATIAIVKELKGLSKPCADSKAIAQVGTISANSDNSIGDIIAEAMEKVGKEGVITVEEGSGLENELSVVEGMQFDRGYLSPYFINKPDTMVAELDGPLILLVDKKISNIREMLPVLEAVAKAGRPLLIVAEDVEGEALATLVVNNMRGIVKVAAVKAPGFGDRRKAMLQDIAVLTGGTVISEEIGLSLESTTLEHLGNAKRVILSKENTTIIDGAGVEADIQARVTQIRQQVADTSSDYDREKLQERLAKLSGGVAVIKVGAGSEVEMKEKKARVEDALHATRAAVEEGVVPGGGVALIRALQGINDLKGDNADQDVGIAVLRRAIEAPLRQIVANSGDEPSVVVDKVKQGAGNFGYNAATSEYGDMIEMGILDPTKVTRSALQAASSIGGLILTTEAAVAEIVEDKPAAGGMPDMGGMGGMGGMM</sequence>